<comment type="function">
    <text evidence="1">May provide oxidative stress protection via catalytic reduction of intracellular hydrogen peroxide.</text>
</comment>
<comment type="cofactor">
    <cofactor evidence="1">
        <name>Fe(3+)</name>
        <dbReference type="ChEBI" id="CHEBI:29034"/>
    </cofactor>
    <text evidence="1">Binds 3 Fe(3+) ions per subunit.</text>
</comment>
<comment type="subunit">
    <text evidence="1">Homodimer. Possesses two rubredoxin-like centers and two non-sulfur oxo-bridged di-iron centers per dimer (By similarity).</text>
</comment>
<comment type="subcellular location">
    <subcellularLocation>
        <location evidence="5">Cytoplasm</location>
    </subcellularLocation>
</comment>
<evidence type="ECO:0000250" key="1"/>
<evidence type="ECO:0000250" key="2">
    <source>
        <dbReference type="UniProtKB" id="P24931"/>
    </source>
</evidence>
<evidence type="ECO:0000255" key="3">
    <source>
        <dbReference type="PROSITE-ProRule" id="PRU00085"/>
    </source>
</evidence>
<evidence type="ECO:0000255" key="4">
    <source>
        <dbReference type="PROSITE-ProRule" id="PRU00241"/>
    </source>
</evidence>
<evidence type="ECO:0000305" key="5"/>
<gene>
    <name type="ordered locus">MJ0734</name>
</gene>
<sequence length="204" mass="23835">MINNFFVINMKETLKNLTKAYIGESLARNRYTCYAKIAKQEGYEQIAEIFLLTAENEREHAKWLYYLITELKKKYNIDDKAIKVDGVEVPIVLGNTAENLKASIEGEHFEHTEMYPKFADIAEKEGLKEIADRLRAIGIAEKHHEERFKKLLKEVEEGTVFKKDKPVEWVCRKCGFVHLGKEPPEKCPSCSHPRKYFEVKCEKY</sequence>
<feature type="chain" id="PRO_0000135067" description="Putative rubrerythrin">
    <location>
        <begin position="1"/>
        <end position="204"/>
    </location>
</feature>
<feature type="domain" description="Ferritin-like diiron" evidence="3">
    <location>
        <begin position="1"/>
        <end position="159"/>
    </location>
</feature>
<feature type="domain" description="Rubredoxin-like" evidence="4">
    <location>
        <begin position="166"/>
        <end position="204"/>
    </location>
</feature>
<feature type="binding site" evidence="2">
    <location>
        <position position="24"/>
    </location>
    <ligand>
        <name>Fe(3+)</name>
        <dbReference type="ChEBI" id="CHEBI:29034"/>
        <label>1</label>
    </ligand>
</feature>
<feature type="binding site" evidence="2">
    <location>
        <position position="57"/>
    </location>
    <ligand>
        <name>Fe(3+)</name>
        <dbReference type="ChEBI" id="CHEBI:29034"/>
        <label>1</label>
    </ligand>
</feature>
<feature type="binding site" evidence="2">
    <location>
        <position position="57"/>
    </location>
    <ligand>
        <name>Fe(3+)</name>
        <dbReference type="ChEBI" id="CHEBI:29034"/>
        <label>2</label>
    </ligand>
</feature>
<feature type="binding site" evidence="2">
    <location>
        <position position="107"/>
    </location>
    <ligand>
        <name>Fe(3+)</name>
        <dbReference type="ChEBI" id="CHEBI:29034"/>
        <label>2</label>
    </ligand>
</feature>
<feature type="binding site" evidence="2">
    <location>
        <position position="110"/>
    </location>
    <ligand>
        <name>Fe(3+)</name>
        <dbReference type="ChEBI" id="CHEBI:29034"/>
        <label>1</label>
    </ligand>
</feature>
<feature type="binding site" evidence="2">
    <location>
        <position position="141"/>
    </location>
    <ligand>
        <name>Fe(3+)</name>
        <dbReference type="ChEBI" id="CHEBI:29034"/>
        <label>1</label>
    </ligand>
</feature>
<feature type="binding site" evidence="2">
    <location>
        <position position="141"/>
    </location>
    <ligand>
        <name>Fe(3+)</name>
        <dbReference type="ChEBI" id="CHEBI:29034"/>
        <label>2</label>
    </ligand>
</feature>
<feature type="binding site" evidence="2">
    <location>
        <position position="144"/>
    </location>
    <ligand>
        <name>Fe(3+)</name>
        <dbReference type="ChEBI" id="CHEBI:29034"/>
        <label>2</label>
    </ligand>
</feature>
<feature type="binding site" evidence="2">
    <location>
        <position position="171"/>
    </location>
    <ligand>
        <name>Fe(3+)</name>
        <dbReference type="ChEBI" id="CHEBI:29034"/>
        <label>3</label>
    </ligand>
</feature>
<feature type="binding site" evidence="2">
    <location>
        <position position="174"/>
    </location>
    <ligand>
        <name>Fe(3+)</name>
        <dbReference type="ChEBI" id="CHEBI:29034"/>
        <label>3</label>
    </ligand>
</feature>
<feature type="binding site" evidence="2">
    <location>
        <position position="187"/>
    </location>
    <ligand>
        <name>Fe(3+)</name>
        <dbReference type="ChEBI" id="CHEBI:29034"/>
        <label>3</label>
    </ligand>
</feature>
<feature type="binding site" evidence="2">
    <location>
        <position position="190"/>
    </location>
    <ligand>
        <name>Fe(3+)</name>
        <dbReference type="ChEBI" id="CHEBI:29034"/>
        <label>3</label>
    </ligand>
</feature>
<reference key="1">
    <citation type="journal article" date="1996" name="Science">
        <title>Complete genome sequence of the methanogenic archaeon, Methanococcus jannaschii.</title>
        <authorList>
            <person name="Bult C.J."/>
            <person name="White O."/>
            <person name="Olsen G.J."/>
            <person name="Zhou L."/>
            <person name="Fleischmann R.D."/>
            <person name="Sutton G.G."/>
            <person name="Blake J.A."/>
            <person name="FitzGerald L.M."/>
            <person name="Clayton R.A."/>
            <person name="Gocayne J.D."/>
            <person name="Kerlavage A.R."/>
            <person name="Dougherty B.A."/>
            <person name="Tomb J.-F."/>
            <person name="Adams M.D."/>
            <person name="Reich C.I."/>
            <person name="Overbeek R."/>
            <person name="Kirkness E.F."/>
            <person name="Weinstock K.G."/>
            <person name="Merrick J.M."/>
            <person name="Glodek A."/>
            <person name="Scott J.L."/>
            <person name="Geoghagen N.S.M."/>
            <person name="Weidman J.F."/>
            <person name="Fuhrmann J.L."/>
            <person name="Nguyen D."/>
            <person name="Utterback T.R."/>
            <person name="Kelley J.M."/>
            <person name="Peterson J.D."/>
            <person name="Sadow P.W."/>
            <person name="Hanna M.C."/>
            <person name="Cotton M.D."/>
            <person name="Roberts K.M."/>
            <person name="Hurst M.A."/>
            <person name="Kaine B.P."/>
            <person name="Borodovsky M."/>
            <person name="Klenk H.-P."/>
            <person name="Fraser C.M."/>
            <person name="Smith H.O."/>
            <person name="Woese C.R."/>
            <person name="Venter J.C."/>
        </authorList>
    </citation>
    <scope>NUCLEOTIDE SEQUENCE [LARGE SCALE GENOMIC DNA]</scope>
    <source>
        <strain>ATCC 43067 / DSM 2661 / JAL-1 / JCM 10045 / NBRC 100440</strain>
    </source>
</reference>
<accession>Q58144</accession>
<name>RUBY_METJA</name>
<protein>
    <recommendedName>
        <fullName>Putative rubrerythrin</fullName>
    </recommendedName>
</protein>
<keyword id="KW-0963">Cytoplasm</keyword>
<keyword id="KW-0249">Electron transport</keyword>
<keyword id="KW-0408">Iron</keyword>
<keyword id="KW-0479">Metal-binding</keyword>
<keyword id="KW-1185">Reference proteome</keyword>
<keyword id="KW-0813">Transport</keyword>
<dbReference type="EMBL" id="L77117">
    <property type="protein sequence ID" value="AAB98729.1"/>
    <property type="molecule type" value="Genomic_DNA"/>
</dbReference>
<dbReference type="PIR" id="F64391">
    <property type="entry name" value="F64391"/>
</dbReference>
<dbReference type="SMR" id="Q58144"/>
<dbReference type="FunCoup" id="Q58144">
    <property type="interactions" value="2"/>
</dbReference>
<dbReference type="STRING" id="243232.MJ_0734"/>
<dbReference type="PaxDb" id="243232-MJ_0734"/>
<dbReference type="EnsemblBacteria" id="AAB98729">
    <property type="protein sequence ID" value="AAB98729"/>
    <property type="gene ID" value="MJ_0734"/>
</dbReference>
<dbReference type="KEGG" id="mja:MJ_0734"/>
<dbReference type="eggNOG" id="arCOG01097">
    <property type="taxonomic scope" value="Archaea"/>
</dbReference>
<dbReference type="HOGENOM" id="CLU_095256_0_0_2"/>
<dbReference type="InParanoid" id="Q58144"/>
<dbReference type="PhylomeDB" id="Q58144"/>
<dbReference type="Proteomes" id="UP000000805">
    <property type="component" value="Chromosome"/>
</dbReference>
<dbReference type="GO" id="GO:0005737">
    <property type="term" value="C:cytoplasm"/>
    <property type="evidence" value="ECO:0007669"/>
    <property type="project" value="UniProtKB-SubCell"/>
</dbReference>
<dbReference type="GO" id="GO:0005506">
    <property type="term" value="F:iron ion binding"/>
    <property type="evidence" value="ECO:0007669"/>
    <property type="project" value="InterPro"/>
</dbReference>
<dbReference type="GO" id="GO:0016491">
    <property type="term" value="F:oxidoreductase activity"/>
    <property type="evidence" value="ECO:0007669"/>
    <property type="project" value="InterPro"/>
</dbReference>
<dbReference type="CDD" id="cd00729">
    <property type="entry name" value="rubredoxin_SM"/>
    <property type="match status" value="1"/>
</dbReference>
<dbReference type="CDD" id="cd01041">
    <property type="entry name" value="Rubrerythrin"/>
    <property type="match status" value="1"/>
</dbReference>
<dbReference type="Gene3D" id="1.20.1260.10">
    <property type="match status" value="1"/>
</dbReference>
<dbReference type="Gene3D" id="2.20.28.10">
    <property type="match status" value="1"/>
</dbReference>
<dbReference type="InterPro" id="IPR012347">
    <property type="entry name" value="Ferritin-like"/>
</dbReference>
<dbReference type="InterPro" id="IPR009040">
    <property type="entry name" value="Ferritin-like_diiron"/>
</dbReference>
<dbReference type="InterPro" id="IPR009078">
    <property type="entry name" value="Ferritin-like_SF"/>
</dbReference>
<dbReference type="InterPro" id="IPR003251">
    <property type="entry name" value="Rr_diiron-bd_dom"/>
</dbReference>
<dbReference type="InterPro" id="IPR024934">
    <property type="entry name" value="Rubredoxin-like_dom"/>
</dbReference>
<dbReference type="InterPro" id="IPR052364">
    <property type="entry name" value="Rubrerythrin"/>
</dbReference>
<dbReference type="InterPro" id="IPR048574">
    <property type="entry name" value="RUBY_RBDX"/>
</dbReference>
<dbReference type="NCBIfam" id="NF045767">
    <property type="entry name" value="RuberyRbr"/>
    <property type="match status" value="1"/>
</dbReference>
<dbReference type="PANTHER" id="PTHR43865">
    <property type="entry name" value="RUBRERYTHRIN-RELATED"/>
    <property type="match status" value="1"/>
</dbReference>
<dbReference type="PANTHER" id="PTHR43865:SF1">
    <property type="entry name" value="RUBRERYTHRIN-RELATED"/>
    <property type="match status" value="1"/>
</dbReference>
<dbReference type="Pfam" id="PF02915">
    <property type="entry name" value="Rubrerythrin"/>
    <property type="match status" value="1"/>
</dbReference>
<dbReference type="Pfam" id="PF21349">
    <property type="entry name" value="RUBY_RBDX"/>
    <property type="match status" value="1"/>
</dbReference>
<dbReference type="SUPFAM" id="SSF47240">
    <property type="entry name" value="Ferritin-like"/>
    <property type="match status" value="1"/>
</dbReference>
<dbReference type="SUPFAM" id="SSF57802">
    <property type="entry name" value="Rubredoxin-like"/>
    <property type="match status" value="1"/>
</dbReference>
<dbReference type="PROSITE" id="PS50905">
    <property type="entry name" value="FERRITIN_LIKE"/>
    <property type="match status" value="1"/>
</dbReference>
<dbReference type="PROSITE" id="PS50903">
    <property type="entry name" value="RUBREDOXIN_LIKE"/>
    <property type="match status" value="1"/>
</dbReference>
<organism>
    <name type="scientific">Methanocaldococcus jannaschii (strain ATCC 43067 / DSM 2661 / JAL-1 / JCM 10045 / NBRC 100440)</name>
    <name type="common">Methanococcus jannaschii</name>
    <dbReference type="NCBI Taxonomy" id="243232"/>
    <lineage>
        <taxon>Archaea</taxon>
        <taxon>Methanobacteriati</taxon>
        <taxon>Methanobacteriota</taxon>
        <taxon>Methanomada group</taxon>
        <taxon>Methanococci</taxon>
        <taxon>Methanococcales</taxon>
        <taxon>Methanocaldococcaceae</taxon>
        <taxon>Methanocaldococcus</taxon>
    </lineage>
</organism>
<proteinExistence type="inferred from homology"/>